<accession>P9WI77</accession>
<accession>L0TA94</accession>
<accession>O08149</accession>
<accession>P72001</accession>
<gene>
    <name type="primary">pknE</name>
    <name type="ordered locus">Rv1743</name>
    <name type="ORF">MTCY28.05</name>
</gene>
<reference key="1">
    <citation type="journal article" date="1998" name="Nature">
        <title>Deciphering the biology of Mycobacterium tuberculosis from the complete genome sequence.</title>
        <authorList>
            <person name="Cole S.T."/>
            <person name="Brosch R."/>
            <person name="Parkhill J."/>
            <person name="Garnier T."/>
            <person name="Churcher C.M."/>
            <person name="Harris D.E."/>
            <person name="Gordon S.V."/>
            <person name="Eiglmeier K."/>
            <person name="Gas S."/>
            <person name="Barry C.E. III"/>
            <person name="Tekaia F."/>
            <person name="Badcock K."/>
            <person name="Basham D."/>
            <person name="Brown D."/>
            <person name="Chillingworth T."/>
            <person name="Connor R."/>
            <person name="Davies R.M."/>
            <person name="Devlin K."/>
            <person name="Feltwell T."/>
            <person name="Gentles S."/>
            <person name="Hamlin N."/>
            <person name="Holroyd S."/>
            <person name="Hornsby T."/>
            <person name="Jagels K."/>
            <person name="Krogh A."/>
            <person name="McLean J."/>
            <person name="Moule S."/>
            <person name="Murphy L.D."/>
            <person name="Oliver S."/>
            <person name="Osborne J."/>
            <person name="Quail M.A."/>
            <person name="Rajandream M.A."/>
            <person name="Rogers J."/>
            <person name="Rutter S."/>
            <person name="Seeger K."/>
            <person name="Skelton S."/>
            <person name="Squares S."/>
            <person name="Squares R."/>
            <person name="Sulston J.E."/>
            <person name="Taylor K."/>
            <person name="Whitehead S."/>
            <person name="Barrell B.G."/>
        </authorList>
    </citation>
    <scope>NUCLEOTIDE SEQUENCE [LARGE SCALE GENOMIC DNA]</scope>
    <source>
        <strain>ATCC 25618 / H37Rv</strain>
    </source>
</reference>
<reference key="2">
    <citation type="journal article" date="2003" name="Biochem. Biophys. Res. Commun.">
        <title>Protein PknE, a novel transmembrane eukaryotic-like serine/threonine kinase from Mycobacterium tuberculosis.</title>
        <authorList>
            <person name="Molle V."/>
            <person name="Girard-Blanc C."/>
            <person name="Kremer L."/>
            <person name="Doublet P."/>
            <person name="Cozzone A.J."/>
            <person name="Prost J.F."/>
        </authorList>
    </citation>
    <scope>CATALYTIC ACTIVITY</scope>
    <scope>SUBCELLULAR LOCATION</scope>
    <scope>TOPOLOGY</scope>
    <scope>AUTOPHOSPHORYLATION</scope>
    <scope>MUTAGENESIS OF LYS-45</scope>
    <source>
        <strain>ATCC 25618 / H37Rv</strain>
    </source>
</reference>
<reference key="3">
    <citation type="journal article" date="2005" name="Biochem. Biophys. Res. Commun.">
        <title>Conserved autophosphorylation pattern in activation loops and juxtamembrane regions of Mycobacterium tuberculosis Ser/Thr protein kinases.</title>
        <authorList>
            <person name="Duran R."/>
            <person name="Villarino A."/>
            <person name="Bellinzoni M."/>
            <person name="Wehenkel A."/>
            <person name="Fernandez P."/>
            <person name="Boitel B."/>
            <person name="Cole S.T."/>
            <person name="Alzari P.M."/>
            <person name="Cervenansky C."/>
        </authorList>
    </citation>
    <scope>PHOSPHORYLATION AT SER-7; THR-11; THR-50; THR-59; THR-170; THR-175 AND THR-178</scope>
    <scope>IDENTIFICATION BY MASS SPECTROMETRY</scope>
</reference>
<reference key="4">
    <citation type="journal article" date="2005" name="Protein Sci.">
        <title>Mycobacterium tuberculosis serine/threonine kinases PknB, PknD, PknE, and PknF phosphorylate multiple FHA domains.</title>
        <authorList>
            <person name="Grundner C."/>
            <person name="Gay L.M."/>
            <person name="Alber T."/>
        </authorList>
    </citation>
    <scope>FUNCTION</scope>
</reference>
<reference key="5">
    <citation type="journal article" date="2006" name="Proteomics">
        <title>Characterization of the phosphorylation sites of Mycobacterium tuberculosis serine/threonine protein kinases, PknA, PknD, PknE, and PknH by mass spectrometry.</title>
        <authorList>
            <person name="Molle V."/>
            <person name="Zanella-Cleon I."/>
            <person name="Robin J.P."/>
            <person name="Mallejac S."/>
            <person name="Cozzone A.J."/>
            <person name="Becchi M."/>
        </authorList>
    </citation>
    <scope>AUTOPHOSPHORYLATION</scope>
    <scope>IDENTIFICATION BY MASS SPECTROMETRY</scope>
    <source>
        <strain>ATCC 25618 / H37Rv</strain>
    </source>
</reference>
<reference key="6">
    <citation type="journal article" date="2008" name="Cell. Microbiol.">
        <title>Protein kinase E of Mycobacterium tuberculosis has a role in the nitric oxide stress response and apoptosis in a human macrophage model of infection.</title>
        <authorList>
            <person name="Jayakumar D."/>
            <person name="Jacobs W.R. Jr."/>
            <person name="Narayanan S."/>
        </authorList>
    </citation>
    <scope>FUNCTION IN VIRULENCE</scope>
    <scope>INDUCTION</scope>
    <scope>DISRUPTION PHENOTYPE</scope>
    <source>
        <strain>ATCC 25618 / H37Rv</strain>
    </source>
</reference>
<reference key="7">
    <citation type="journal article" date="2011" name="Mol. Cell. Proteomics">
        <title>Proteogenomic analysis of Mycobacterium tuberculosis by high resolution mass spectrometry.</title>
        <authorList>
            <person name="Kelkar D.S."/>
            <person name="Kumar D."/>
            <person name="Kumar P."/>
            <person name="Balakrishnan L."/>
            <person name="Muthusamy B."/>
            <person name="Yadav A.K."/>
            <person name="Shrivastava P."/>
            <person name="Marimuthu A."/>
            <person name="Anand S."/>
            <person name="Sundaram H."/>
            <person name="Kingsbury R."/>
            <person name="Harsha H.C."/>
            <person name="Nair B."/>
            <person name="Prasad T.S."/>
            <person name="Chauhan D.S."/>
            <person name="Katoch K."/>
            <person name="Katoch V.M."/>
            <person name="Kumar P."/>
            <person name="Chaerkady R."/>
            <person name="Ramachandran S."/>
            <person name="Dash D."/>
            <person name="Pandey A."/>
        </authorList>
    </citation>
    <scope>IDENTIFICATION BY MASS SPECTROMETRY [LARGE SCALE ANALYSIS]</scope>
    <source>
        <strain>ATCC 25618 / H37Rv</strain>
    </source>
</reference>
<reference key="8">
    <citation type="journal article" date="2013" name="Arch. Microbiol.">
        <title>PknE, a serine/threonine protein kinase from Mycobacterium tuberculosis has a role in adaptive responses.</title>
        <authorList>
            <person name="Kumar D."/>
            <person name="Palaniyandi K."/>
            <person name="Challu V.K."/>
            <person name="Kumar P."/>
            <person name="Narayanan S."/>
        </authorList>
    </citation>
    <scope>FUNCTION IN VIRULENCE</scope>
    <scope>DISRUPTION PHENOTYPE</scope>
    <source>
        <strain>ATCC 25618 / H37Rv</strain>
    </source>
</reference>
<reference key="9">
    <citation type="journal article" date="2012" name="Infect. Genet. Evol.">
        <title>pknE, a serine/threonine kinase of Mycobacterium tuberculosis modulates multiple apoptotic paradigms.</title>
        <authorList>
            <person name="Kumar D."/>
            <person name="Narayanan S."/>
        </authorList>
    </citation>
    <scope>FUNCTION IN VIRULENCE</scope>
    <scope>DISRUPTION PHENOTYPE</scope>
</reference>
<reference key="10">
    <citation type="journal article" date="2006" name="J. Mol. Biol.">
        <title>A conserved dimer and global conformational changes in the structure of apo-PknE Ser/Thr protein kinase from Mycobacterium tuberculosis.</title>
        <authorList>
            <person name="Gay L.M."/>
            <person name="Ng H.L."/>
            <person name="Alber T."/>
        </authorList>
    </citation>
    <scope>X-RAY CRYSTALLOGRAPHY (2.8 ANGSTROMS) OF 1-289</scope>
    <scope>SUBUNIT</scope>
    <source>
        <strain>ATCC 25618 / H37Rv</strain>
    </source>
</reference>
<dbReference type="EC" id="2.7.11.1"/>
<dbReference type="EMBL" id="AL123456">
    <property type="protein sequence ID" value="CCP44509.1"/>
    <property type="molecule type" value="Genomic_DNA"/>
</dbReference>
<dbReference type="PIR" id="H70985">
    <property type="entry name" value="H70985"/>
</dbReference>
<dbReference type="RefSeq" id="NP_216259.1">
    <property type="nucleotide sequence ID" value="NC_000962.3"/>
</dbReference>
<dbReference type="RefSeq" id="WP_003898998.1">
    <property type="nucleotide sequence ID" value="NZ_NVQJ01000010.1"/>
</dbReference>
<dbReference type="PDB" id="2H34">
    <property type="method" value="X-ray"/>
    <property type="resolution" value="2.80 A"/>
    <property type="chains" value="A/B=1-289"/>
</dbReference>
<dbReference type="PDBsum" id="2H34"/>
<dbReference type="SMR" id="P9WI77"/>
<dbReference type="FunCoup" id="P9WI77">
    <property type="interactions" value="25"/>
</dbReference>
<dbReference type="IntAct" id="P9WI77">
    <property type="interactions" value="2"/>
</dbReference>
<dbReference type="STRING" id="83332.Rv1743"/>
<dbReference type="iPTMnet" id="P9WI77"/>
<dbReference type="PaxDb" id="83332-Rv1743"/>
<dbReference type="DNASU" id="885284"/>
<dbReference type="GeneID" id="885284"/>
<dbReference type="KEGG" id="mtu:Rv1743"/>
<dbReference type="KEGG" id="mtv:RVBD_1743"/>
<dbReference type="TubercuList" id="Rv1743"/>
<dbReference type="eggNOG" id="COG0515">
    <property type="taxonomic scope" value="Bacteria"/>
</dbReference>
<dbReference type="eggNOG" id="COG1651">
    <property type="taxonomic scope" value="Bacteria"/>
</dbReference>
<dbReference type="InParanoid" id="P9WI77"/>
<dbReference type="OrthoDB" id="9762169at2"/>
<dbReference type="PhylomeDB" id="P9WI77"/>
<dbReference type="BRENDA" id="2.7.11.1">
    <property type="organism ID" value="3445"/>
</dbReference>
<dbReference type="EvolutionaryTrace" id="P9WI77"/>
<dbReference type="PHI-base" id="PHI:3625"/>
<dbReference type="Proteomes" id="UP000001584">
    <property type="component" value="Chromosome"/>
</dbReference>
<dbReference type="GO" id="GO:0005576">
    <property type="term" value="C:extracellular region"/>
    <property type="evidence" value="ECO:0007005"/>
    <property type="project" value="MTBBASE"/>
</dbReference>
<dbReference type="GO" id="GO:0005886">
    <property type="term" value="C:plasma membrane"/>
    <property type="evidence" value="ECO:0007669"/>
    <property type="project" value="UniProtKB-SubCell"/>
</dbReference>
<dbReference type="GO" id="GO:0005524">
    <property type="term" value="F:ATP binding"/>
    <property type="evidence" value="ECO:0007669"/>
    <property type="project" value="UniProtKB-KW"/>
</dbReference>
<dbReference type="GO" id="GO:0004672">
    <property type="term" value="F:protein kinase activity"/>
    <property type="evidence" value="ECO:0000314"/>
    <property type="project" value="MTBBASE"/>
</dbReference>
<dbReference type="GO" id="GO:0106310">
    <property type="term" value="F:protein serine kinase activity"/>
    <property type="evidence" value="ECO:0007669"/>
    <property type="project" value="RHEA"/>
</dbReference>
<dbReference type="GO" id="GO:0004674">
    <property type="term" value="F:protein serine/threonine kinase activity"/>
    <property type="evidence" value="ECO:0000314"/>
    <property type="project" value="MTBBASE"/>
</dbReference>
<dbReference type="GO" id="GO:0045717">
    <property type="term" value="P:negative regulation of fatty acid biosynthetic process"/>
    <property type="evidence" value="ECO:0000314"/>
    <property type="project" value="MTBBASE"/>
</dbReference>
<dbReference type="GO" id="GO:0051409">
    <property type="term" value="P:response to nitrosative stress"/>
    <property type="evidence" value="ECO:0000315"/>
    <property type="project" value="MTBBASE"/>
</dbReference>
<dbReference type="CDD" id="cd14014">
    <property type="entry name" value="STKc_PknB_like"/>
    <property type="match status" value="1"/>
</dbReference>
<dbReference type="FunFam" id="1.10.510.10:FF:000021">
    <property type="entry name" value="Serine/threonine protein kinase"/>
    <property type="match status" value="1"/>
</dbReference>
<dbReference type="FunFam" id="3.30.200.20:FF:000348">
    <property type="entry name" value="Serine/threonine protein kinase"/>
    <property type="match status" value="1"/>
</dbReference>
<dbReference type="FunFam" id="3.40.30.10:FF:000373">
    <property type="entry name" value="Transmembrane serine/threonine-protein kinase E"/>
    <property type="match status" value="1"/>
</dbReference>
<dbReference type="Gene3D" id="3.40.30.10">
    <property type="entry name" value="Glutaredoxin"/>
    <property type="match status" value="1"/>
</dbReference>
<dbReference type="Gene3D" id="3.30.200.20">
    <property type="entry name" value="Phosphorylase Kinase, domain 1"/>
    <property type="match status" value="1"/>
</dbReference>
<dbReference type="Gene3D" id="1.10.510.10">
    <property type="entry name" value="Transferase(Phosphotransferase) domain 1"/>
    <property type="match status" value="1"/>
</dbReference>
<dbReference type="InterPro" id="IPR011009">
    <property type="entry name" value="Kinase-like_dom_sf"/>
</dbReference>
<dbReference type="InterPro" id="IPR000719">
    <property type="entry name" value="Prot_kinase_dom"/>
</dbReference>
<dbReference type="InterPro" id="IPR017441">
    <property type="entry name" value="Protein_kinase_ATP_BS"/>
</dbReference>
<dbReference type="InterPro" id="IPR012336">
    <property type="entry name" value="Thioredoxin-like_fold"/>
</dbReference>
<dbReference type="InterPro" id="IPR036249">
    <property type="entry name" value="Thioredoxin-like_sf"/>
</dbReference>
<dbReference type="PANTHER" id="PTHR43289">
    <property type="entry name" value="MITOGEN-ACTIVATED PROTEIN KINASE KINASE KINASE 20-RELATED"/>
    <property type="match status" value="1"/>
</dbReference>
<dbReference type="PANTHER" id="PTHR43289:SF6">
    <property type="entry name" value="SERINE_THREONINE-PROTEIN KINASE NEKL-3"/>
    <property type="match status" value="1"/>
</dbReference>
<dbReference type="Pfam" id="PF00069">
    <property type="entry name" value="Pkinase"/>
    <property type="match status" value="1"/>
</dbReference>
<dbReference type="Pfam" id="PF13462">
    <property type="entry name" value="Thioredoxin_4"/>
    <property type="match status" value="1"/>
</dbReference>
<dbReference type="SMART" id="SM00220">
    <property type="entry name" value="S_TKc"/>
    <property type="match status" value="1"/>
</dbReference>
<dbReference type="SUPFAM" id="SSF56112">
    <property type="entry name" value="Protein kinase-like (PK-like)"/>
    <property type="match status" value="1"/>
</dbReference>
<dbReference type="SUPFAM" id="SSF52833">
    <property type="entry name" value="Thioredoxin-like"/>
    <property type="match status" value="1"/>
</dbReference>
<dbReference type="PROSITE" id="PS00107">
    <property type="entry name" value="PROTEIN_KINASE_ATP"/>
    <property type="match status" value="1"/>
</dbReference>
<dbReference type="PROSITE" id="PS50011">
    <property type="entry name" value="PROTEIN_KINASE_DOM"/>
    <property type="match status" value="1"/>
</dbReference>
<feature type="chain" id="PRO_0000171211" description="Serine/threonine-protein kinase PknE">
    <location>
        <begin position="1"/>
        <end position="566"/>
    </location>
</feature>
<feature type="topological domain" description="Cytoplasmic" evidence="1">
    <location>
        <begin position="1"/>
        <end position="337"/>
    </location>
</feature>
<feature type="transmembrane region" description="Helical" evidence="1">
    <location>
        <begin position="338"/>
        <end position="358"/>
    </location>
</feature>
<feature type="topological domain" description="Extracellular" evidence="1">
    <location>
        <begin position="359"/>
        <end position="566"/>
    </location>
</feature>
<feature type="domain" description="Protein kinase" evidence="2">
    <location>
        <begin position="16"/>
        <end position="275"/>
    </location>
</feature>
<feature type="region of interest" description="Disordered" evidence="3">
    <location>
        <begin position="296"/>
        <end position="330"/>
    </location>
</feature>
<feature type="active site" description="Proton acceptor" evidence="2">
    <location>
        <position position="139"/>
    </location>
</feature>
<feature type="binding site" evidence="2">
    <location>
        <begin position="22"/>
        <end position="30"/>
    </location>
    <ligand>
        <name>ATP</name>
        <dbReference type="ChEBI" id="CHEBI:30616"/>
    </ligand>
</feature>
<feature type="binding site" evidence="2">
    <location>
        <position position="45"/>
    </location>
    <ligand>
        <name>ATP</name>
        <dbReference type="ChEBI" id="CHEBI:30616"/>
    </ligand>
</feature>
<feature type="modified residue" description="Phosphoserine; by autocatalysis" evidence="5">
    <location>
        <position position="7"/>
    </location>
</feature>
<feature type="modified residue" description="Phosphothreonine; by autocatalysis" evidence="5">
    <location>
        <position position="11"/>
    </location>
</feature>
<feature type="modified residue" description="Phosphothreonine; by autocatalysis" evidence="5">
    <location>
        <position position="50"/>
    </location>
</feature>
<feature type="modified residue" description="Phosphothreonine; by autocatalysis" evidence="5">
    <location>
        <position position="59"/>
    </location>
</feature>
<feature type="modified residue" description="Phosphothreonine; by autocatalysis" evidence="5">
    <location>
        <position position="170"/>
    </location>
</feature>
<feature type="modified residue" description="Phosphothreonine; by autocatalysis" evidence="5">
    <location>
        <position position="175"/>
    </location>
</feature>
<feature type="modified residue" description="Phosphothreonine; by autocatalysis" evidence="5">
    <location>
        <position position="178"/>
    </location>
</feature>
<feature type="mutagenesis site" description="Lack of kinase activity." evidence="4">
    <original>K</original>
    <variation>M</variation>
    <location>
        <position position="45"/>
    </location>
</feature>
<feature type="strand" evidence="11">
    <location>
        <begin position="18"/>
        <end position="24"/>
    </location>
</feature>
<feature type="strand" evidence="11">
    <location>
        <begin position="26"/>
        <end position="35"/>
    </location>
</feature>
<feature type="turn" evidence="11">
    <location>
        <begin position="36"/>
        <end position="39"/>
    </location>
</feature>
<feature type="strand" evidence="11">
    <location>
        <begin position="40"/>
        <end position="46"/>
    </location>
</feature>
<feature type="helix" evidence="11">
    <location>
        <begin position="48"/>
        <end position="53"/>
    </location>
</feature>
<feature type="helix" evidence="11">
    <location>
        <begin position="55"/>
        <end position="68"/>
    </location>
</feature>
<feature type="strand" evidence="11">
    <location>
        <begin position="79"/>
        <end position="85"/>
    </location>
</feature>
<feature type="strand" evidence="11">
    <location>
        <begin position="88"/>
        <end position="94"/>
    </location>
</feature>
<feature type="helix" evidence="11">
    <location>
        <begin position="101"/>
        <end position="108"/>
    </location>
</feature>
<feature type="helix" evidence="11">
    <location>
        <begin position="113"/>
        <end position="132"/>
    </location>
</feature>
<feature type="helix" evidence="11">
    <location>
        <begin position="142"/>
        <end position="144"/>
    </location>
</feature>
<feature type="strand" evidence="11">
    <location>
        <begin position="145"/>
        <end position="147"/>
    </location>
</feature>
<feature type="strand" evidence="11">
    <location>
        <begin position="153"/>
        <end position="155"/>
    </location>
</feature>
<feature type="helix" evidence="11">
    <location>
        <begin position="179"/>
        <end position="181"/>
    </location>
</feature>
<feature type="helix" evidence="11">
    <location>
        <begin position="184"/>
        <end position="186"/>
    </location>
</feature>
<feature type="helix" evidence="11">
    <location>
        <begin position="197"/>
        <end position="210"/>
    </location>
</feature>
<feature type="helix" evidence="11">
    <location>
        <begin position="219"/>
        <end position="228"/>
    </location>
</feature>
<feature type="helix" evidence="11">
    <location>
        <begin position="234"/>
        <end position="236"/>
    </location>
</feature>
<feature type="helix" evidence="11">
    <location>
        <begin position="244"/>
        <end position="252"/>
    </location>
</feature>
<feature type="helix" evidence="11">
    <location>
        <begin position="257"/>
        <end position="259"/>
    </location>
</feature>
<feature type="helix" evidence="11">
    <location>
        <begin position="264"/>
        <end position="273"/>
    </location>
</feature>
<organism>
    <name type="scientific">Mycobacterium tuberculosis (strain ATCC 25618 / H37Rv)</name>
    <dbReference type="NCBI Taxonomy" id="83332"/>
    <lineage>
        <taxon>Bacteria</taxon>
        <taxon>Bacillati</taxon>
        <taxon>Actinomycetota</taxon>
        <taxon>Actinomycetes</taxon>
        <taxon>Mycobacteriales</taxon>
        <taxon>Mycobacteriaceae</taxon>
        <taxon>Mycobacterium</taxon>
        <taxon>Mycobacterium tuberculosis complex</taxon>
    </lineage>
</organism>
<evidence type="ECO:0000255" key="1"/>
<evidence type="ECO:0000255" key="2">
    <source>
        <dbReference type="PROSITE-ProRule" id="PRU00159"/>
    </source>
</evidence>
<evidence type="ECO:0000256" key="3">
    <source>
        <dbReference type="SAM" id="MobiDB-lite"/>
    </source>
</evidence>
<evidence type="ECO:0000269" key="4">
    <source>
    </source>
</evidence>
<evidence type="ECO:0000269" key="5">
    <source>
    </source>
</evidence>
<evidence type="ECO:0000269" key="6">
    <source>
    </source>
</evidence>
<evidence type="ECO:0000269" key="7">
    <source>
    </source>
</evidence>
<evidence type="ECO:0000269" key="8">
    <source>
    </source>
</evidence>
<evidence type="ECO:0000269" key="9">
    <source>
    </source>
</evidence>
<evidence type="ECO:0000269" key="10">
    <source>
    </source>
</evidence>
<evidence type="ECO:0007829" key="11">
    <source>
        <dbReference type="PDB" id="2H34"/>
    </source>
</evidence>
<protein>
    <recommendedName>
        <fullName>Serine/threonine-protein kinase PknE</fullName>
        <ecNumber>2.7.11.1</ecNumber>
    </recommendedName>
</protein>
<keyword id="KW-0002">3D-structure</keyword>
<keyword id="KW-0067">ATP-binding</keyword>
<keyword id="KW-1003">Cell membrane</keyword>
<keyword id="KW-0418">Kinase</keyword>
<keyword id="KW-0472">Membrane</keyword>
<keyword id="KW-0547">Nucleotide-binding</keyword>
<keyword id="KW-0597">Phosphoprotein</keyword>
<keyword id="KW-1185">Reference proteome</keyword>
<keyword id="KW-0723">Serine/threonine-protein kinase</keyword>
<keyword id="KW-0346">Stress response</keyword>
<keyword id="KW-0808">Transferase</keyword>
<keyword id="KW-0812">Transmembrane</keyword>
<keyword id="KW-1133">Transmembrane helix</keyword>
<keyword id="KW-0843">Virulence</keyword>
<comment type="function">
    <text evidence="6 8 9 10">Important for survival of the bacterium in the host during infection. Promotes the survival of infected macrophages by activating multiple signaling responses and suppressing apoptosis of macrophages during nitrate stress. May contribute to the adaptation of M.tuberculosis during stress conditions by maintaining the cellular integrity. Can phosphorylate the FHA domain of Rv1747.</text>
</comment>
<comment type="catalytic activity">
    <reaction evidence="4">
        <text>L-seryl-[protein] + ATP = O-phospho-L-seryl-[protein] + ADP + H(+)</text>
        <dbReference type="Rhea" id="RHEA:17989"/>
        <dbReference type="Rhea" id="RHEA-COMP:9863"/>
        <dbReference type="Rhea" id="RHEA-COMP:11604"/>
        <dbReference type="ChEBI" id="CHEBI:15378"/>
        <dbReference type="ChEBI" id="CHEBI:29999"/>
        <dbReference type="ChEBI" id="CHEBI:30616"/>
        <dbReference type="ChEBI" id="CHEBI:83421"/>
        <dbReference type="ChEBI" id="CHEBI:456216"/>
        <dbReference type="EC" id="2.7.11.1"/>
    </reaction>
</comment>
<comment type="catalytic activity">
    <reaction evidence="4">
        <text>L-threonyl-[protein] + ATP = O-phospho-L-threonyl-[protein] + ADP + H(+)</text>
        <dbReference type="Rhea" id="RHEA:46608"/>
        <dbReference type="Rhea" id="RHEA-COMP:11060"/>
        <dbReference type="Rhea" id="RHEA-COMP:11605"/>
        <dbReference type="ChEBI" id="CHEBI:15378"/>
        <dbReference type="ChEBI" id="CHEBI:30013"/>
        <dbReference type="ChEBI" id="CHEBI:30616"/>
        <dbReference type="ChEBI" id="CHEBI:61977"/>
        <dbReference type="ChEBI" id="CHEBI:456216"/>
        <dbReference type="EC" id="2.7.11.1"/>
    </reaction>
</comment>
<comment type="subunit">
    <text evidence="7">Homodimer.</text>
</comment>
<comment type="subcellular location">
    <subcellularLocation>
        <location evidence="4">Cell membrane</location>
        <topology evidence="4">Single-pass membrane protein</topology>
    </subcellularLocation>
</comment>
<comment type="induction">
    <text evidence="8">Induced by nitric oxide stress. Repressed under oxidative stress.</text>
</comment>
<comment type="PTM">
    <text evidence="5">Autophosphorylated on serine and threonine residues. Dephosphorylated by PstP.</text>
</comment>
<comment type="disruption phenotype">
    <text evidence="8 9 10">Mutants show increased resistance to nitric oxide donors, increased sensitivity to reducing agents, and growth reduction at pH 7.0 and in the presence of lysozyme. They increase macrophage apoptosis, and exhibit lower rates of survival and multiplication in an in vitro macrophage model of infection.</text>
</comment>
<comment type="similarity">
    <text evidence="2">Belongs to the protein kinase superfamily. Ser/Thr protein kinase family.</text>
</comment>
<proteinExistence type="evidence at protein level"/>
<sequence>MDGTAESREGTQFGPYRLRRLVGRGGMGDVYEAEDTVRERIVALKLMSETLSSDPVFRTRMQREARTAGRLQEPHVVPIHDFGEIDGQLYVDMRLINGVDLAAMLRRQGPLAPPRAVAIVRQIGSALDAAHAAGATHRDVKPENILVSADDFAYLVDFGIASATTDEKLTQLGNTVGTLYYMAPERFSESHATYRADIYALTCVLYECLTGSPPYQGDQLSVMGAHINQAIPRPSTVRPGIPVAFDAVIARGMAKNPEDRYVTCGDLSAAAHAALATADQDRATDILRRSQVAKLPVPSTHPVSPGTRWPQPTPWAGGAPPWGPPSSPLPRSARQPWLWVGVAVAVVVALAGGLGIALAHPWRSSGPRTSAPPPPPPADAVELRVLNDGVFVGSSVAPTTIDIFNEPICPPCGSFIRSYASDIDTAVADKQLAVRYHLLNFLDDQSHSKNYSTRAVAASYCVAGQNDPKLYASFYSALFGSDFQPQENAASDRTDAELAHLAQTVGAEPTAISCIKSGADLGTAQTKATNASETLAGFNASGTPFVWDGSMVVNYQDPSWLARLIG</sequence>
<name>PKNE_MYCTU</name>